<proteinExistence type="evidence at protein level"/>
<gene>
    <name type="primary">FLT3LG</name>
</gene>
<reference key="1">
    <citation type="journal article" date="1994" name="Nature">
        <title>Ligand for FLT3/FLK2 receptor tyrosine kinase regulates growth of haematopoietic stem cells and is encoded by variant RNAs.</title>
        <authorList>
            <person name="Hannum C."/>
            <person name="Culpepper J."/>
            <person name="Campbell D."/>
            <person name="McClanahan T."/>
            <person name="Zurawski S."/>
            <person name="Bazan J.F."/>
            <person name="Kastelein R."/>
            <person name="Hudak S."/>
            <person name="Wagner J."/>
            <person name="Mattson J."/>
            <person name="Luh J."/>
            <person name="Duda G."/>
            <person name="Martina N."/>
            <person name="Peterson D."/>
            <person name="Menon S."/>
            <person name="Shanafelt A."/>
            <person name="Muench M."/>
            <person name="Kelner G."/>
            <person name="Namikawa R."/>
            <person name="Rennick D."/>
            <person name="Roncarolo M.G."/>
            <person name="Zlotnik A."/>
            <person name="Rosnet O."/>
            <person name="Dubreuil P."/>
            <person name="Birnbaum D."/>
            <person name="Lee F."/>
        </authorList>
    </citation>
    <scope>NUCLEOTIDE SEQUENCE [MRNA] (ISOFORM 1)</scope>
</reference>
<reference key="2">
    <citation type="journal article" date="1994" name="Blood">
        <title>Cloning of the human homologue of the murine flt3 ligand: a growth factor for early hematopoietic progenitor cells.</title>
        <authorList>
            <person name="Lyman S.D."/>
            <person name="James L."/>
            <person name="Johnson L."/>
            <person name="Brasel K."/>
            <person name="de Vries P."/>
            <person name="Escobar S.S."/>
            <person name="Downey H."/>
            <person name="Splett R.R."/>
            <person name="Beckmann M.P."/>
            <person name="McKenna H.J."/>
        </authorList>
    </citation>
    <scope>NUCLEOTIDE SEQUENCE [MRNA] (ISOFORM 1)</scope>
</reference>
<reference key="3">
    <citation type="journal article" date="1995" name="Oncogene">
        <title>Structural analysis of human and murine flt3 ligand genomic loci.</title>
        <authorList>
            <person name="Lyman S.D."/>
            <person name="Stocking K."/>
            <person name="Davison B."/>
            <person name="Fletcher F."/>
            <person name="Johnson L."/>
            <person name="Escobar S."/>
        </authorList>
    </citation>
    <scope>NUCLEOTIDE SEQUENCE [GENOMIC DNA]</scope>
    <scope>ALTERNATIVE SPLICING</scope>
</reference>
<reference key="4">
    <citation type="journal article" date="2004" name="Nat. Genet.">
        <title>Complete sequencing and characterization of 21,243 full-length human cDNAs.</title>
        <authorList>
            <person name="Ota T."/>
            <person name="Suzuki Y."/>
            <person name="Nishikawa T."/>
            <person name="Otsuki T."/>
            <person name="Sugiyama T."/>
            <person name="Irie R."/>
            <person name="Wakamatsu A."/>
            <person name="Hayashi K."/>
            <person name="Sato H."/>
            <person name="Nagai K."/>
            <person name="Kimura K."/>
            <person name="Makita H."/>
            <person name="Sekine M."/>
            <person name="Obayashi M."/>
            <person name="Nishi T."/>
            <person name="Shibahara T."/>
            <person name="Tanaka T."/>
            <person name="Ishii S."/>
            <person name="Yamamoto J."/>
            <person name="Saito K."/>
            <person name="Kawai Y."/>
            <person name="Isono Y."/>
            <person name="Nakamura Y."/>
            <person name="Nagahari K."/>
            <person name="Murakami K."/>
            <person name="Yasuda T."/>
            <person name="Iwayanagi T."/>
            <person name="Wagatsuma M."/>
            <person name="Shiratori A."/>
            <person name="Sudo H."/>
            <person name="Hosoiri T."/>
            <person name="Kaku Y."/>
            <person name="Kodaira H."/>
            <person name="Kondo H."/>
            <person name="Sugawara M."/>
            <person name="Takahashi M."/>
            <person name="Kanda K."/>
            <person name="Yokoi T."/>
            <person name="Furuya T."/>
            <person name="Kikkawa E."/>
            <person name="Omura Y."/>
            <person name="Abe K."/>
            <person name="Kamihara K."/>
            <person name="Katsuta N."/>
            <person name="Sato K."/>
            <person name="Tanikawa M."/>
            <person name="Yamazaki M."/>
            <person name="Ninomiya K."/>
            <person name="Ishibashi T."/>
            <person name="Yamashita H."/>
            <person name="Murakawa K."/>
            <person name="Fujimori K."/>
            <person name="Tanai H."/>
            <person name="Kimata M."/>
            <person name="Watanabe M."/>
            <person name="Hiraoka S."/>
            <person name="Chiba Y."/>
            <person name="Ishida S."/>
            <person name="Ono Y."/>
            <person name="Takiguchi S."/>
            <person name="Watanabe S."/>
            <person name="Yosida M."/>
            <person name="Hotuta T."/>
            <person name="Kusano J."/>
            <person name="Kanehori K."/>
            <person name="Takahashi-Fujii A."/>
            <person name="Hara H."/>
            <person name="Tanase T.-O."/>
            <person name="Nomura Y."/>
            <person name="Togiya S."/>
            <person name="Komai F."/>
            <person name="Hara R."/>
            <person name="Takeuchi K."/>
            <person name="Arita M."/>
            <person name="Imose N."/>
            <person name="Musashino K."/>
            <person name="Yuuki H."/>
            <person name="Oshima A."/>
            <person name="Sasaki N."/>
            <person name="Aotsuka S."/>
            <person name="Yoshikawa Y."/>
            <person name="Matsunawa H."/>
            <person name="Ichihara T."/>
            <person name="Shiohata N."/>
            <person name="Sano S."/>
            <person name="Moriya S."/>
            <person name="Momiyama H."/>
            <person name="Satoh N."/>
            <person name="Takami S."/>
            <person name="Terashima Y."/>
            <person name="Suzuki O."/>
            <person name="Nakagawa S."/>
            <person name="Senoh A."/>
            <person name="Mizoguchi H."/>
            <person name="Goto Y."/>
            <person name="Shimizu F."/>
            <person name="Wakebe H."/>
            <person name="Hishigaki H."/>
            <person name="Watanabe T."/>
            <person name="Sugiyama A."/>
            <person name="Takemoto M."/>
            <person name="Kawakami B."/>
            <person name="Yamazaki M."/>
            <person name="Watanabe K."/>
            <person name="Kumagai A."/>
            <person name="Itakura S."/>
            <person name="Fukuzumi Y."/>
            <person name="Fujimori Y."/>
            <person name="Komiyama M."/>
            <person name="Tashiro H."/>
            <person name="Tanigami A."/>
            <person name="Fujiwara T."/>
            <person name="Ono T."/>
            <person name="Yamada K."/>
            <person name="Fujii Y."/>
            <person name="Ozaki K."/>
            <person name="Hirao M."/>
            <person name="Ohmori Y."/>
            <person name="Kawabata A."/>
            <person name="Hikiji T."/>
            <person name="Kobatake N."/>
            <person name="Inagaki H."/>
            <person name="Ikema Y."/>
            <person name="Okamoto S."/>
            <person name="Okitani R."/>
            <person name="Kawakami T."/>
            <person name="Noguchi S."/>
            <person name="Itoh T."/>
            <person name="Shigeta K."/>
            <person name="Senba T."/>
            <person name="Matsumura K."/>
            <person name="Nakajima Y."/>
            <person name="Mizuno T."/>
            <person name="Morinaga M."/>
            <person name="Sasaki M."/>
            <person name="Togashi T."/>
            <person name="Oyama M."/>
            <person name="Hata H."/>
            <person name="Watanabe M."/>
            <person name="Komatsu T."/>
            <person name="Mizushima-Sugano J."/>
            <person name="Satoh T."/>
            <person name="Shirai Y."/>
            <person name="Takahashi Y."/>
            <person name="Nakagawa K."/>
            <person name="Okumura K."/>
            <person name="Nagase T."/>
            <person name="Nomura N."/>
            <person name="Kikuchi H."/>
            <person name="Masuho Y."/>
            <person name="Yamashita R."/>
            <person name="Nakai K."/>
            <person name="Yada T."/>
            <person name="Nakamura Y."/>
            <person name="Ohara O."/>
            <person name="Isogai T."/>
            <person name="Sugano S."/>
        </authorList>
    </citation>
    <scope>NUCLEOTIDE SEQUENCE [LARGE SCALE MRNA] (ISOFORM 3)</scope>
    <source>
        <tissue>Spleen</tissue>
    </source>
</reference>
<reference key="5">
    <citation type="journal article" date="2004" name="Nature">
        <title>The DNA sequence and biology of human chromosome 19.</title>
        <authorList>
            <person name="Grimwood J."/>
            <person name="Gordon L.A."/>
            <person name="Olsen A.S."/>
            <person name="Terry A."/>
            <person name="Schmutz J."/>
            <person name="Lamerdin J.E."/>
            <person name="Hellsten U."/>
            <person name="Goodstein D."/>
            <person name="Couronne O."/>
            <person name="Tran-Gyamfi M."/>
            <person name="Aerts A."/>
            <person name="Altherr M."/>
            <person name="Ashworth L."/>
            <person name="Bajorek E."/>
            <person name="Black S."/>
            <person name="Branscomb E."/>
            <person name="Caenepeel S."/>
            <person name="Carrano A.V."/>
            <person name="Caoile C."/>
            <person name="Chan Y.M."/>
            <person name="Christensen M."/>
            <person name="Cleland C.A."/>
            <person name="Copeland A."/>
            <person name="Dalin E."/>
            <person name="Dehal P."/>
            <person name="Denys M."/>
            <person name="Detter J.C."/>
            <person name="Escobar J."/>
            <person name="Flowers D."/>
            <person name="Fotopulos D."/>
            <person name="Garcia C."/>
            <person name="Georgescu A.M."/>
            <person name="Glavina T."/>
            <person name="Gomez M."/>
            <person name="Gonzales E."/>
            <person name="Groza M."/>
            <person name="Hammon N."/>
            <person name="Hawkins T."/>
            <person name="Haydu L."/>
            <person name="Ho I."/>
            <person name="Huang W."/>
            <person name="Israni S."/>
            <person name="Jett J."/>
            <person name="Kadner K."/>
            <person name="Kimball H."/>
            <person name="Kobayashi A."/>
            <person name="Larionov V."/>
            <person name="Leem S.-H."/>
            <person name="Lopez F."/>
            <person name="Lou Y."/>
            <person name="Lowry S."/>
            <person name="Malfatti S."/>
            <person name="Martinez D."/>
            <person name="McCready P.M."/>
            <person name="Medina C."/>
            <person name="Morgan J."/>
            <person name="Nelson K."/>
            <person name="Nolan M."/>
            <person name="Ovcharenko I."/>
            <person name="Pitluck S."/>
            <person name="Pollard M."/>
            <person name="Popkie A.P."/>
            <person name="Predki P."/>
            <person name="Quan G."/>
            <person name="Ramirez L."/>
            <person name="Rash S."/>
            <person name="Retterer J."/>
            <person name="Rodriguez A."/>
            <person name="Rogers S."/>
            <person name="Salamov A."/>
            <person name="Salazar A."/>
            <person name="She X."/>
            <person name="Smith D."/>
            <person name="Slezak T."/>
            <person name="Solovyev V."/>
            <person name="Thayer N."/>
            <person name="Tice H."/>
            <person name="Tsai M."/>
            <person name="Ustaszewska A."/>
            <person name="Vo N."/>
            <person name="Wagner M."/>
            <person name="Wheeler J."/>
            <person name="Wu K."/>
            <person name="Xie G."/>
            <person name="Yang J."/>
            <person name="Dubchak I."/>
            <person name="Furey T.S."/>
            <person name="DeJong P."/>
            <person name="Dickson M."/>
            <person name="Gordon D."/>
            <person name="Eichler E.E."/>
            <person name="Pennacchio L.A."/>
            <person name="Richardson P."/>
            <person name="Stubbs L."/>
            <person name="Rokhsar D.S."/>
            <person name="Myers R.M."/>
            <person name="Rubin E.M."/>
            <person name="Lucas S.M."/>
        </authorList>
    </citation>
    <scope>NUCLEOTIDE SEQUENCE [LARGE SCALE GENOMIC DNA]</scope>
</reference>
<reference key="6">
    <citation type="journal article" date="2004" name="Genome Res.">
        <title>The status, quality, and expansion of the NIH full-length cDNA project: the Mammalian Gene Collection (MGC).</title>
        <authorList>
            <consortium name="The MGC Project Team"/>
        </authorList>
    </citation>
    <scope>NUCLEOTIDE SEQUENCE [LARGE SCALE MRNA] (ISOFORMS 1 AND 3)</scope>
    <source>
        <tissue>Brain</tissue>
    </source>
</reference>
<reference key="7">
    <citation type="journal article" date="2024" name="Cell">
        <title>FLT3L governs the development of partially overlapping hematopoietic lineages in humans and mice.</title>
        <authorList>
            <person name="Momenilandi M."/>
            <person name="Levy R."/>
            <person name="Sobrino S."/>
            <person name="Li J."/>
            <person name="Lagresle-Peyrou C."/>
            <person name="Esmaeilzadeh H."/>
            <person name="Fayand A."/>
            <person name="Le Floc'h C."/>
            <person name="Guerin A."/>
            <person name="Della Mina E."/>
            <person name="Shearer D."/>
            <person name="Delmonte O.M."/>
            <person name="Yatim A."/>
            <person name="Mulder K."/>
            <person name="Mancini M."/>
            <person name="Rinchai D."/>
            <person name="Denis A."/>
            <person name="Neehus A.L."/>
            <person name="Balogh K."/>
            <person name="Brendle S."/>
            <person name="Rokni-Zadeh H."/>
            <person name="Changi-Ashtiani M."/>
            <person name="Seeleuthner Y."/>
            <person name="Deswarte C."/>
            <person name="Bessot B."/>
            <person name="Cremades C."/>
            <person name="Materna M."/>
            <person name="Cederholm A."/>
            <person name="Ogishi M."/>
            <person name="Philippot Q."/>
            <person name="Beganovic O."/>
            <person name="Ackermann M."/>
            <person name="Wuyts M."/>
            <person name="Khan T."/>
            <person name="Fouere S."/>
            <person name="Herms F."/>
            <person name="Chanal J."/>
            <person name="Palterer B."/>
            <person name="Bruneau J."/>
            <person name="Molina T.J."/>
            <person name="Leclerc-Mercier S."/>
            <person name="Pretet J.L."/>
            <person name="Youssefian L."/>
            <person name="Vahidnezhad H."/>
            <person name="Parvaneh N."/>
            <person name="Claeys K.G."/>
            <person name="Schrijvers R."/>
            <person name="Luka M."/>
            <person name="Perot P."/>
            <person name="Fourgeaud J."/>
            <person name="Nourrisson C."/>
            <person name="Poirier P."/>
            <person name="Jouanguy E."/>
            <person name="Boisson-Dupuis S."/>
            <person name="Bustamante J."/>
            <person name="Notarangelo L.D."/>
            <person name="Christensen N."/>
            <person name="Landegren N."/>
            <person name="Abel L."/>
            <person name="Marr N."/>
            <person name="Six E."/>
            <person name="Langlais D."/>
            <person name="Waterboer T."/>
            <person name="Ginhoux F."/>
            <person name="Ma C.S."/>
            <person name="Tangye S.G."/>
            <person name="Meyts I."/>
            <person name="Lachmann N."/>
            <person name="Hu J."/>
            <person name="Shahrooei M."/>
            <person name="Bossuyt X."/>
            <person name="Casanova J.L."/>
            <person name="Beziat V."/>
        </authorList>
    </citation>
    <scope>INVOLVEMENT IN IMD125</scope>
    <scope>FUNCTION</scope>
</reference>
<reference key="8">
    <citation type="journal article" date="2000" name="Nat. Struct. Biol.">
        <title>Flt3 ligand structure and unexpected commonalities of helical bundles and cystine knots.</title>
        <authorList>
            <person name="Savvides S.N."/>
            <person name="Boone T."/>
            <person name="Karplus P.A."/>
        </authorList>
    </citation>
    <scope>X-RAY CRYSTALLOGRAPHY (2.2 ANGSTROMS)</scope>
</reference>
<protein>
    <recommendedName>
        <fullName>Fms-related tyrosine kinase 3 ligand</fullName>
        <shortName>Flt3 ligand</shortName>
        <shortName>Flt3L</shortName>
    </recommendedName>
    <alternativeName>
        <fullName>SL cytokine</fullName>
    </alternativeName>
</protein>
<comment type="function">
    <text evidence="3">Stimulates the proliferation of early hematopoietic cells by activating FLT3. Synergizes well with a number of other colony stimulating factors and interleukins. Required for the development of B cells, and dendritic cells (DCs).</text>
</comment>
<comment type="subunit">
    <text>Homodimer (isoform 2).</text>
</comment>
<comment type="interaction">
    <interactant intactId="EBI-724977">
        <id>P49771</id>
    </interactant>
    <interactant intactId="EBI-3958099">
        <id>P26371</id>
        <label>KRTAP5-9</label>
    </interactant>
    <organismsDiffer>false</organismsDiffer>
    <experiments>3</experiments>
</comment>
<comment type="interaction">
    <interactant intactId="EBI-25872794">
        <id>P49771-3</id>
    </interactant>
    <interactant intactId="EBI-21591415">
        <id>P13473-2</id>
        <label>LAMP2</label>
    </interactant>
    <organismsDiffer>false</organismsDiffer>
    <experiments>3</experiments>
</comment>
<comment type="interaction">
    <interactant intactId="EBI-25872794">
        <id>P49771-3</id>
    </interactant>
    <interactant intactId="EBI-2623095">
        <id>Q9Y371</id>
        <label>SH3GLB1</label>
    </interactant>
    <organismsDiffer>false</organismsDiffer>
    <experiments>3</experiments>
</comment>
<comment type="subcellular location">
    <molecule>Isoform 1</molecule>
    <subcellularLocation>
        <location>Cell membrane</location>
        <topology>Single-pass type I membrane protein</topology>
    </subcellularLocation>
</comment>
<comment type="subcellular location">
    <molecule>Isoform 2</molecule>
    <subcellularLocation>
        <location>Secreted</location>
    </subcellularLocation>
</comment>
<comment type="alternative products">
    <event type="alternative splicing"/>
    <isoform>
        <id>P49771-1</id>
        <name>1</name>
        <name>Membrane-bound</name>
        <sequence type="displayed"/>
    </isoform>
    <isoform>
        <id>P49771-2</id>
        <name>2</name>
        <name>Soluble</name>
        <sequence type="described" ref="VSP_004251 VSP_004252"/>
    </isoform>
    <isoform>
        <id>P49771-3</id>
        <name>3</name>
        <sequence type="described" ref="VSP_054599"/>
    </isoform>
</comment>
<comment type="disease" evidence="3">
    <disease id="DI-06932">
        <name>Immunodeficiency 125</name>
        <acronym>IMD125</acronym>
        <description>An autosomal recessive immunologic disorder characterized by failure to thrive and chronic diarrhea in infancy, and recurrent bacterial, viral, and fungal infections. Patients have severe human papilloma virus (HPV) infections with disseminated common warts, and the bone marrow is hypoplastic with low levels of CD34+ hematopoietic stem cells. Counts of B cells, monocytes, and dendritic cells are low in patients blood.</description>
        <dbReference type="MIM" id="620926"/>
    </disease>
    <text>The disease may be caused by variants affecting the gene represented in this entry.</text>
</comment>
<organism>
    <name type="scientific">Homo sapiens</name>
    <name type="common">Human</name>
    <dbReference type="NCBI Taxonomy" id="9606"/>
    <lineage>
        <taxon>Eukaryota</taxon>
        <taxon>Metazoa</taxon>
        <taxon>Chordata</taxon>
        <taxon>Craniata</taxon>
        <taxon>Vertebrata</taxon>
        <taxon>Euteleostomi</taxon>
        <taxon>Mammalia</taxon>
        <taxon>Eutheria</taxon>
        <taxon>Euarchontoglires</taxon>
        <taxon>Primates</taxon>
        <taxon>Haplorrhini</taxon>
        <taxon>Catarrhini</taxon>
        <taxon>Hominidae</taxon>
        <taxon>Homo</taxon>
    </lineage>
</organism>
<accession>P49771</accession>
<accession>A0AVC2</accession>
<accession>B9EGH2</accession>
<accession>Q05C96</accession>
<sequence>MTVLAPAWSPTTYLLLLLLLSSGLSGTQDCSFQHSPISSDFAVKIRELSDYLLQDYPVTVASNLQDEELCGGLWRLVLAQRWMERLKTVAGSKMQGLLERVNTEIHFVTKCAFQPPPSCLRFVQTNISRLLQETSEQLVALKPWITRQNFSRCLELQCQPDSSTLPPPWSPRPLEATAPTAPQPPLLLLLLLPVGLLLLAAAWCLHWQRTRRRTPRPGEQVPPVPSPQDLLLVEH</sequence>
<name>FLT3L_HUMAN</name>
<evidence type="ECO:0000255" key="1"/>
<evidence type="ECO:0000256" key="2">
    <source>
        <dbReference type="SAM" id="MobiDB-lite"/>
    </source>
</evidence>
<evidence type="ECO:0000269" key="3">
    <source>
    </source>
</evidence>
<evidence type="ECO:0000303" key="4">
    <source>
    </source>
</evidence>
<evidence type="ECO:0000303" key="5">
    <source>
    </source>
</evidence>
<evidence type="ECO:0000305" key="6"/>
<evidence type="ECO:0007829" key="7">
    <source>
        <dbReference type="PDB" id="7NBI"/>
    </source>
</evidence>
<dbReference type="EMBL" id="U04806">
    <property type="protein sequence ID" value="AAA17999.1"/>
    <property type="molecule type" value="mRNA"/>
</dbReference>
<dbReference type="EMBL" id="U03858">
    <property type="protein sequence ID" value="AAA19825.1"/>
    <property type="molecule type" value="mRNA"/>
</dbReference>
<dbReference type="EMBL" id="U29874">
    <property type="protein sequence ID" value="AAA90949.1"/>
    <property type="molecule type" value="Genomic_DNA"/>
</dbReference>
<dbReference type="EMBL" id="U29874">
    <property type="protein sequence ID" value="AAA90950.1"/>
    <property type="molecule type" value="Genomic_DNA"/>
</dbReference>
<dbReference type="EMBL" id="AK301136">
    <property type="protein sequence ID" value="BAG62728.1"/>
    <property type="molecule type" value="mRNA"/>
</dbReference>
<dbReference type="EMBL" id="AC010619">
    <property type="status" value="NOT_ANNOTATED_CDS"/>
    <property type="molecule type" value="Genomic_DNA"/>
</dbReference>
<dbReference type="EMBL" id="BC028001">
    <property type="protein sequence ID" value="AAH28001.1"/>
    <property type="molecule type" value="mRNA"/>
</dbReference>
<dbReference type="EMBL" id="BC126293">
    <property type="protein sequence ID" value="AAI26294.1"/>
    <property type="molecule type" value="mRNA"/>
</dbReference>
<dbReference type="EMBL" id="BC136464">
    <property type="protein sequence ID" value="AAI36465.1"/>
    <property type="molecule type" value="mRNA"/>
</dbReference>
<dbReference type="CCDS" id="CCDS12767.1">
    <molecule id="P49771-1"/>
</dbReference>
<dbReference type="CCDS" id="CCDS62753.1">
    <molecule id="P49771-3"/>
</dbReference>
<dbReference type="PIR" id="I38440">
    <property type="entry name" value="I38440"/>
</dbReference>
<dbReference type="PIR" id="I39076">
    <property type="entry name" value="I39076"/>
</dbReference>
<dbReference type="RefSeq" id="NP_001191431.1">
    <molecule id="P49771-1"/>
    <property type="nucleotide sequence ID" value="NM_001204502.2"/>
</dbReference>
<dbReference type="RefSeq" id="NP_001191432.1">
    <molecule id="P49771-1"/>
    <property type="nucleotide sequence ID" value="NM_001204503.2"/>
</dbReference>
<dbReference type="RefSeq" id="NP_001265566.1">
    <molecule id="P49771-3"/>
    <property type="nucleotide sequence ID" value="NM_001278637.2"/>
</dbReference>
<dbReference type="RefSeq" id="NP_001265567.1">
    <molecule id="P49771-3"/>
    <property type="nucleotide sequence ID" value="NM_001278638.2"/>
</dbReference>
<dbReference type="RefSeq" id="NP_001450.2">
    <molecule id="P49771-1"/>
    <property type="nucleotide sequence ID" value="NM_001459.3"/>
</dbReference>
<dbReference type="RefSeq" id="XP_011524984.1">
    <property type="nucleotide sequence ID" value="XM_011526682.2"/>
</dbReference>
<dbReference type="RefSeq" id="XP_047294476.1">
    <molecule id="P49771-1"/>
    <property type="nucleotide sequence ID" value="XM_047438520.1"/>
</dbReference>
<dbReference type="RefSeq" id="XP_054176333.1">
    <molecule id="P49771-1"/>
    <property type="nucleotide sequence ID" value="XM_054320358.1"/>
</dbReference>
<dbReference type="PDB" id="1ETE">
    <property type="method" value="X-ray"/>
    <property type="resolution" value="2.20 A"/>
    <property type="chains" value="A/B/C/D=27-160"/>
</dbReference>
<dbReference type="PDB" id="3QS7">
    <property type="method" value="X-ray"/>
    <property type="resolution" value="4.30 A"/>
    <property type="chains" value="A/B/C/D=27-160"/>
</dbReference>
<dbReference type="PDB" id="3QS9">
    <property type="method" value="X-ray"/>
    <property type="resolution" value="7.80 A"/>
    <property type="chains" value="A/B/C/D=27-160"/>
</dbReference>
<dbReference type="PDB" id="7NBI">
    <property type="method" value="X-ray"/>
    <property type="resolution" value="1.65 A"/>
    <property type="chains" value="A/B=27-160"/>
</dbReference>
<dbReference type="PDB" id="7QDP">
    <property type="method" value="X-ray"/>
    <property type="resolution" value="3.69 A"/>
    <property type="chains" value="A/B/C/D=27-160"/>
</dbReference>
<dbReference type="PDB" id="7ZV9">
    <property type="method" value="X-ray"/>
    <property type="resolution" value="4.51 A"/>
    <property type="chains" value="A/C/E/G/I/K/M/O=27-160"/>
</dbReference>
<dbReference type="PDBsum" id="1ETE"/>
<dbReference type="PDBsum" id="3QS7"/>
<dbReference type="PDBsum" id="3QS9"/>
<dbReference type="PDBsum" id="7NBI"/>
<dbReference type="PDBsum" id="7QDP"/>
<dbReference type="PDBsum" id="7ZV9"/>
<dbReference type="SMR" id="P49771"/>
<dbReference type="BioGRID" id="108611">
    <property type="interactions" value="5"/>
</dbReference>
<dbReference type="CORUM" id="P49771"/>
<dbReference type="DIP" id="DIP-6220N"/>
<dbReference type="FunCoup" id="P49771">
    <property type="interactions" value="707"/>
</dbReference>
<dbReference type="IntAct" id="P49771">
    <property type="interactions" value="5"/>
</dbReference>
<dbReference type="STRING" id="9606.ENSP00000469613"/>
<dbReference type="GlyCosmos" id="P49771">
    <property type="glycosylation" value="2 sites, No reported glycans"/>
</dbReference>
<dbReference type="GlyGen" id="P49771">
    <property type="glycosylation" value="2 sites, 1 N-linked glycan (1 site)"/>
</dbReference>
<dbReference type="iPTMnet" id="P49771"/>
<dbReference type="PhosphoSitePlus" id="P49771"/>
<dbReference type="BioMuta" id="FLT3LG"/>
<dbReference type="DMDM" id="1706818"/>
<dbReference type="jPOST" id="P49771"/>
<dbReference type="PaxDb" id="9606-ENSP00000469613"/>
<dbReference type="PeptideAtlas" id="P49771"/>
<dbReference type="ProteomicsDB" id="56114">
    <molecule id="P49771-1"/>
</dbReference>
<dbReference type="ProteomicsDB" id="56115">
    <molecule id="P49771-2"/>
</dbReference>
<dbReference type="ABCD" id="P49771">
    <property type="antibodies" value="7 sequenced antibodies"/>
</dbReference>
<dbReference type="Antibodypedia" id="2271">
    <property type="antibodies" value="432 antibodies from 35 providers"/>
</dbReference>
<dbReference type="DNASU" id="2323"/>
<dbReference type="Ensembl" id="ENST00000204637.6">
    <molecule id="P49771-3"/>
    <property type="protein sequence ID" value="ENSP00000204637.2"/>
    <property type="gene ID" value="ENSG00000090554.13"/>
</dbReference>
<dbReference type="Ensembl" id="ENST00000594009.5">
    <molecule id="P49771-1"/>
    <property type="protein sequence ID" value="ENSP00000469613.1"/>
    <property type="gene ID" value="ENSG00000090554.13"/>
</dbReference>
<dbReference type="Ensembl" id="ENST00000595510.1">
    <molecule id="P49771-3"/>
    <property type="protein sequence ID" value="ENSP00000471226.1"/>
    <property type="gene ID" value="ENSG00000090554.13"/>
</dbReference>
<dbReference type="Ensembl" id="ENST00000597551.6">
    <molecule id="P49771-1"/>
    <property type="protein sequence ID" value="ENSP00000468977.1"/>
    <property type="gene ID" value="ENSG00000090554.13"/>
</dbReference>
<dbReference type="Ensembl" id="ENST00000600429.5">
    <molecule id="P49771-1"/>
    <property type="protein sequence ID" value="ENSP00000470453.1"/>
    <property type="gene ID" value="ENSG00000090554.13"/>
</dbReference>
<dbReference type="GeneID" id="2323"/>
<dbReference type="KEGG" id="hsa:2323"/>
<dbReference type="MANE-Select" id="ENST00000597551.6">
    <property type="protein sequence ID" value="ENSP00000468977.1"/>
    <property type="RefSeq nucleotide sequence ID" value="NM_001459.4"/>
    <property type="RefSeq protein sequence ID" value="NP_001450.2"/>
</dbReference>
<dbReference type="UCSC" id="uc002pnu.4">
    <molecule id="P49771-1"/>
    <property type="organism name" value="human"/>
</dbReference>
<dbReference type="AGR" id="HGNC:3766"/>
<dbReference type="CTD" id="2323"/>
<dbReference type="DisGeNET" id="2323"/>
<dbReference type="GeneCards" id="FLT3LG"/>
<dbReference type="HGNC" id="HGNC:3766">
    <property type="gene designation" value="FLT3LG"/>
</dbReference>
<dbReference type="HPA" id="ENSG00000090554">
    <property type="expression patterns" value="Low tissue specificity"/>
</dbReference>
<dbReference type="MalaCards" id="FLT3LG"/>
<dbReference type="MIM" id="600007">
    <property type="type" value="gene"/>
</dbReference>
<dbReference type="MIM" id="620926">
    <property type="type" value="phenotype"/>
</dbReference>
<dbReference type="neXtProt" id="NX_P49771"/>
<dbReference type="OpenTargets" id="ENSG00000090554"/>
<dbReference type="PharmGKB" id="PA28182"/>
<dbReference type="VEuPathDB" id="HostDB:ENSG00000090554"/>
<dbReference type="eggNOG" id="ENOG502SAIE">
    <property type="taxonomic scope" value="Eukaryota"/>
</dbReference>
<dbReference type="GeneTree" id="ENSGT00530000064424"/>
<dbReference type="HOGENOM" id="CLU_082442_1_0_1"/>
<dbReference type="InParanoid" id="P49771"/>
<dbReference type="OMA" id="PIPLCTK"/>
<dbReference type="OrthoDB" id="9944810at2759"/>
<dbReference type="PAN-GO" id="P49771">
    <property type="GO annotations" value="4 GO annotations based on evolutionary models"/>
</dbReference>
<dbReference type="PhylomeDB" id="P49771"/>
<dbReference type="TreeFam" id="TF338225"/>
<dbReference type="PathwayCommons" id="P49771"/>
<dbReference type="Reactome" id="R-HSA-109704">
    <property type="pathway name" value="PI3K Cascade"/>
</dbReference>
<dbReference type="Reactome" id="R-HSA-1257604">
    <property type="pathway name" value="PIP3 activates AKT signaling"/>
</dbReference>
<dbReference type="Reactome" id="R-HSA-2219530">
    <property type="pathway name" value="Constitutive Signaling by Aberrant PI3K in Cancer"/>
</dbReference>
<dbReference type="Reactome" id="R-HSA-5673001">
    <property type="pathway name" value="RAF/MAP kinase cascade"/>
</dbReference>
<dbReference type="Reactome" id="R-HSA-6811558">
    <property type="pathway name" value="PI5P, PP2A and IER3 Regulate PI3K/AKT Signaling"/>
</dbReference>
<dbReference type="Reactome" id="R-HSA-9607240">
    <property type="pathway name" value="FLT3 Signaling"/>
</dbReference>
<dbReference type="Reactome" id="R-HSA-9645135">
    <property type="pathway name" value="STAT5 Activation"/>
</dbReference>
<dbReference type="Reactome" id="R-HSA-9706369">
    <property type="pathway name" value="Negative regulation of FLT3"/>
</dbReference>
<dbReference type="Reactome" id="R-HSA-9706374">
    <property type="pathway name" value="FLT3 signaling through SRC family kinases"/>
</dbReference>
<dbReference type="Reactome" id="R-HSA-9706377">
    <property type="pathway name" value="FLT3 signaling by CBL mutants"/>
</dbReference>
<dbReference type="SignaLink" id="P49771"/>
<dbReference type="SIGNOR" id="P49771"/>
<dbReference type="BioGRID-ORCS" id="2323">
    <property type="hits" value="33 hits in 1165 CRISPR screens"/>
</dbReference>
<dbReference type="EvolutionaryTrace" id="P49771"/>
<dbReference type="GeneWiki" id="FLT3LG"/>
<dbReference type="GenomeRNAi" id="2323"/>
<dbReference type="Pharos" id="P49771">
    <property type="development level" value="Tbio"/>
</dbReference>
<dbReference type="PRO" id="PR:P49771"/>
<dbReference type="Proteomes" id="UP000005640">
    <property type="component" value="Chromosome 19"/>
</dbReference>
<dbReference type="RNAct" id="P49771">
    <property type="molecule type" value="protein"/>
</dbReference>
<dbReference type="Bgee" id="ENSG00000090554">
    <property type="expression patterns" value="Expressed in granulocyte and 98 other cell types or tissues"/>
</dbReference>
<dbReference type="ExpressionAtlas" id="P49771">
    <property type="expression patterns" value="baseline and differential"/>
</dbReference>
<dbReference type="GO" id="GO:0009986">
    <property type="term" value="C:cell surface"/>
    <property type="evidence" value="ECO:0000318"/>
    <property type="project" value="GO_Central"/>
</dbReference>
<dbReference type="GO" id="GO:0005829">
    <property type="term" value="C:cytosol"/>
    <property type="evidence" value="ECO:0000304"/>
    <property type="project" value="Reactome"/>
</dbReference>
<dbReference type="GO" id="GO:0005576">
    <property type="term" value="C:extracellular region"/>
    <property type="evidence" value="ECO:0000304"/>
    <property type="project" value="Reactome"/>
</dbReference>
<dbReference type="GO" id="GO:0005615">
    <property type="term" value="C:extracellular space"/>
    <property type="evidence" value="ECO:0000318"/>
    <property type="project" value="GO_Central"/>
</dbReference>
<dbReference type="GO" id="GO:0016020">
    <property type="term" value="C:membrane"/>
    <property type="evidence" value="ECO:0000303"/>
    <property type="project" value="UniProtKB"/>
</dbReference>
<dbReference type="GO" id="GO:0005886">
    <property type="term" value="C:plasma membrane"/>
    <property type="evidence" value="ECO:0007669"/>
    <property type="project" value="UniProtKB-SubCell"/>
</dbReference>
<dbReference type="GO" id="GO:0005125">
    <property type="term" value="F:cytokine activity"/>
    <property type="evidence" value="ECO:0007669"/>
    <property type="project" value="UniProtKB-KW"/>
</dbReference>
<dbReference type="GO" id="GO:0030971">
    <property type="term" value="F:receptor tyrosine kinase binding"/>
    <property type="evidence" value="ECO:0000318"/>
    <property type="project" value="GO_Central"/>
</dbReference>
<dbReference type="GO" id="GO:0005102">
    <property type="term" value="F:signaling receptor binding"/>
    <property type="evidence" value="ECO:0000304"/>
    <property type="project" value="ProtInc"/>
</dbReference>
<dbReference type="GO" id="GO:0030183">
    <property type="term" value="P:B cell differentiation"/>
    <property type="evidence" value="ECO:0000315"/>
    <property type="project" value="UniProtKB"/>
</dbReference>
<dbReference type="GO" id="GO:0097028">
    <property type="term" value="P:dendritic cell differentiation"/>
    <property type="evidence" value="ECO:0000315"/>
    <property type="project" value="UniProtKB"/>
</dbReference>
<dbReference type="GO" id="GO:0035162">
    <property type="term" value="P:embryonic hemopoiesis"/>
    <property type="evidence" value="ECO:0000314"/>
    <property type="project" value="DFLAT"/>
</dbReference>
<dbReference type="GO" id="GO:0008284">
    <property type="term" value="P:positive regulation of cell population proliferation"/>
    <property type="evidence" value="ECO:0000314"/>
    <property type="project" value="UniProtKB"/>
</dbReference>
<dbReference type="GO" id="GO:0032819">
    <property type="term" value="P:positive regulation of natural killer cell proliferation"/>
    <property type="evidence" value="ECO:0007669"/>
    <property type="project" value="Ensembl"/>
</dbReference>
<dbReference type="GO" id="GO:0007165">
    <property type="term" value="P:signal transduction"/>
    <property type="evidence" value="ECO:0000304"/>
    <property type="project" value="ProtInc"/>
</dbReference>
<dbReference type="FunFam" id="1.20.1250.10:FF:000016">
    <property type="entry name" value="Fms-related tyrosine kinase 3 ligand"/>
    <property type="match status" value="1"/>
</dbReference>
<dbReference type="Gene3D" id="1.20.1250.10">
    <property type="match status" value="1"/>
</dbReference>
<dbReference type="InterPro" id="IPR009079">
    <property type="entry name" value="4_helix_cytokine-like_core"/>
</dbReference>
<dbReference type="InterPro" id="IPR004213">
    <property type="entry name" value="Flt3_lig"/>
</dbReference>
<dbReference type="PANTHER" id="PTHR11032:SF1">
    <property type="entry name" value="FMS-RELATED TYROSINE KINASE 3 LIGAND"/>
    <property type="match status" value="1"/>
</dbReference>
<dbReference type="PANTHER" id="PTHR11032">
    <property type="entry name" value="SL CYTOKINE"/>
    <property type="match status" value="1"/>
</dbReference>
<dbReference type="Pfam" id="PF02947">
    <property type="entry name" value="Flt3_lig"/>
    <property type="match status" value="1"/>
</dbReference>
<dbReference type="SUPFAM" id="SSF47266">
    <property type="entry name" value="4-helical cytokines"/>
    <property type="match status" value="1"/>
</dbReference>
<feature type="signal peptide" evidence="1">
    <location>
        <begin position="1"/>
        <end position="26"/>
    </location>
</feature>
<feature type="chain" id="PRO_0000021281" description="Fms-related tyrosine kinase 3 ligand">
    <location>
        <begin position="27"/>
        <end position="235"/>
    </location>
</feature>
<feature type="topological domain" description="Extracellular" evidence="1">
    <location>
        <begin position="27"/>
        <end position="184"/>
    </location>
</feature>
<feature type="transmembrane region" description="Helical" evidence="1">
    <location>
        <begin position="185"/>
        <end position="205"/>
    </location>
</feature>
<feature type="topological domain" description="Cytoplasmic" evidence="1">
    <location>
        <begin position="206"/>
        <end position="235"/>
    </location>
</feature>
<feature type="region of interest" description="Disordered" evidence="2">
    <location>
        <begin position="213"/>
        <end position="235"/>
    </location>
</feature>
<feature type="glycosylation site" description="N-linked (GlcNAc...) asparagine" evidence="1">
    <location>
        <position position="126"/>
    </location>
</feature>
<feature type="glycosylation site" description="N-linked (GlcNAc...) asparagine" evidence="1">
    <location>
        <position position="149"/>
    </location>
</feature>
<feature type="disulfide bond">
    <location>
        <begin position="30"/>
        <end position="111"/>
    </location>
</feature>
<feature type="disulfide bond">
    <location>
        <begin position="70"/>
        <end position="153"/>
    </location>
</feature>
<feature type="disulfide bond">
    <location>
        <begin position="119"/>
        <end position="158"/>
    </location>
</feature>
<feature type="splice variant" id="VSP_054599" description="In isoform 3." evidence="4 5">
    <location>
        <begin position="1"/>
        <end position="82"/>
    </location>
</feature>
<feature type="splice variant" id="VSP_004251" description="In isoform 2." evidence="6">
    <original>DSSTLPPPWSPRPLEATA</original>
    <variation>VETVFHRVSQDGLDLLTS</variation>
    <location>
        <begin position="161"/>
        <end position="178"/>
    </location>
</feature>
<feature type="splice variant" id="VSP_004252" description="In isoform 2." evidence="6">
    <location>
        <begin position="179"/>
        <end position="235"/>
    </location>
</feature>
<feature type="sequence conflict" description="In Ref. 1; AAA17999." evidence="6" ref="1">
    <original>G</original>
    <variation>A</variation>
    <location>
        <position position="72"/>
    </location>
</feature>
<feature type="helix" evidence="7">
    <location>
        <begin position="41"/>
        <end position="51"/>
    </location>
</feature>
<feature type="strand" evidence="7">
    <location>
        <begin position="58"/>
        <end position="64"/>
    </location>
</feature>
<feature type="helix" evidence="7">
    <location>
        <begin position="69"/>
        <end position="89"/>
    </location>
</feature>
<feature type="helix" evidence="7">
    <location>
        <begin position="92"/>
        <end position="94"/>
    </location>
</feature>
<feature type="helix" evidence="7">
    <location>
        <begin position="95"/>
        <end position="105"/>
    </location>
</feature>
<feature type="helix" evidence="7">
    <location>
        <begin position="106"/>
        <end position="110"/>
    </location>
</feature>
<feature type="strand" evidence="7">
    <location>
        <begin position="122"/>
        <end position="125"/>
    </location>
</feature>
<feature type="helix" evidence="7">
    <location>
        <begin position="127"/>
        <end position="141"/>
    </location>
</feature>
<feature type="turn" evidence="7">
    <location>
        <begin position="142"/>
        <end position="147"/>
    </location>
</feature>
<feature type="helix" evidence="7">
    <location>
        <begin position="151"/>
        <end position="153"/>
    </location>
</feature>
<keyword id="KW-0002">3D-structure</keyword>
<keyword id="KW-0025">Alternative splicing</keyword>
<keyword id="KW-1003">Cell membrane</keyword>
<keyword id="KW-0202">Cytokine</keyword>
<keyword id="KW-1015">Disulfide bond</keyword>
<keyword id="KW-0325">Glycoprotein</keyword>
<keyword id="KW-0472">Membrane</keyword>
<keyword id="KW-1267">Proteomics identification</keyword>
<keyword id="KW-1185">Reference proteome</keyword>
<keyword id="KW-0964">Secreted</keyword>
<keyword id="KW-0732">Signal</keyword>
<keyword id="KW-0812">Transmembrane</keyword>
<keyword id="KW-1133">Transmembrane helix</keyword>